<gene>
    <name evidence="1" type="primary">rpoC</name>
    <name type="ordered locus">Sbal223_4062</name>
</gene>
<feature type="chain" id="PRO_1000165848" description="DNA-directed RNA polymerase subunit beta'">
    <location>
        <begin position="1"/>
        <end position="1405"/>
    </location>
</feature>
<feature type="binding site" evidence="1">
    <location>
        <position position="70"/>
    </location>
    <ligand>
        <name>Zn(2+)</name>
        <dbReference type="ChEBI" id="CHEBI:29105"/>
        <label>1</label>
    </ligand>
</feature>
<feature type="binding site" evidence="1">
    <location>
        <position position="72"/>
    </location>
    <ligand>
        <name>Zn(2+)</name>
        <dbReference type="ChEBI" id="CHEBI:29105"/>
        <label>1</label>
    </ligand>
</feature>
<feature type="binding site" evidence="1">
    <location>
        <position position="85"/>
    </location>
    <ligand>
        <name>Zn(2+)</name>
        <dbReference type="ChEBI" id="CHEBI:29105"/>
        <label>1</label>
    </ligand>
</feature>
<feature type="binding site" evidence="1">
    <location>
        <position position="88"/>
    </location>
    <ligand>
        <name>Zn(2+)</name>
        <dbReference type="ChEBI" id="CHEBI:29105"/>
        <label>1</label>
    </ligand>
</feature>
<feature type="binding site" evidence="1">
    <location>
        <position position="460"/>
    </location>
    <ligand>
        <name>Mg(2+)</name>
        <dbReference type="ChEBI" id="CHEBI:18420"/>
    </ligand>
</feature>
<feature type="binding site" evidence="1">
    <location>
        <position position="462"/>
    </location>
    <ligand>
        <name>Mg(2+)</name>
        <dbReference type="ChEBI" id="CHEBI:18420"/>
    </ligand>
</feature>
<feature type="binding site" evidence="1">
    <location>
        <position position="464"/>
    </location>
    <ligand>
        <name>Mg(2+)</name>
        <dbReference type="ChEBI" id="CHEBI:18420"/>
    </ligand>
</feature>
<feature type="binding site" evidence="1">
    <location>
        <position position="814"/>
    </location>
    <ligand>
        <name>Zn(2+)</name>
        <dbReference type="ChEBI" id="CHEBI:29105"/>
        <label>2</label>
    </ligand>
</feature>
<feature type="binding site" evidence="1">
    <location>
        <position position="888"/>
    </location>
    <ligand>
        <name>Zn(2+)</name>
        <dbReference type="ChEBI" id="CHEBI:29105"/>
        <label>2</label>
    </ligand>
</feature>
<feature type="binding site" evidence="1">
    <location>
        <position position="895"/>
    </location>
    <ligand>
        <name>Zn(2+)</name>
        <dbReference type="ChEBI" id="CHEBI:29105"/>
        <label>2</label>
    </ligand>
</feature>
<feature type="binding site" evidence="1">
    <location>
        <position position="898"/>
    </location>
    <ligand>
        <name>Zn(2+)</name>
        <dbReference type="ChEBI" id="CHEBI:29105"/>
        <label>2</label>
    </ligand>
</feature>
<keyword id="KW-0240">DNA-directed RNA polymerase</keyword>
<keyword id="KW-0460">Magnesium</keyword>
<keyword id="KW-0479">Metal-binding</keyword>
<keyword id="KW-0548">Nucleotidyltransferase</keyword>
<keyword id="KW-0804">Transcription</keyword>
<keyword id="KW-0808">Transferase</keyword>
<keyword id="KW-0862">Zinc</keyword>
<name>RPOC_SHEB2</name>
<reference key="1">
    <citation type="submission" date="2008-12" db="EMBL/GenBank/DDBJ databases">
        <title>Complete sequence of chromosome of Shewanella baltica OS223.</title>
        <authorList>
            <consortium name="US DOE Joint Genome Institute"/>
            <person name="Lucas S."/>
            <person name="Copeland A."/>
            <person name="Lapidus A."/>
            <person name="Glavina del Rio T."/>
            <person name="Dalin E."/>
            <person name="Tice H."/>
            <person name="Bruce D."/>
            <person name="Goodwin L."/>
            <person name="Pitluck S."/>
            <person name="Chertkov O."/>
            <person name="Meincke L."/>
            <person name="Brettin T."/>
            <person name="Detter J.C."/>
            <person name="Han C."/>
            <person name="Kuske C.R."/>
            <person name="Larimer F."/>
            <person name="Land M."/>
            <person name="Hauser L."/>
            <person name="Kyrpides N."/>
            <person name="Ovchinnikova G."/>
            <person name="Brettar I."/>
            <person name="Rodrigues J."/>
            <person name="Konstantinidis K."/>
            <person name="Tiedje J."/>
        </authorList>
    </citation>
    <scope>NUCLEOTIDE SEQUENCE [LARGE SCALE GENOMIC DNA]</scope>
    <source>
        <strain>OS223</strain>
    </source>
</reference>
<evidence type="ECO:0000255" key="1">
    <source>
        <dbReference type="HAMAP-Rule" id="MF_01322"/>
    </source>
</evidence>
<organism>
    <name type="scientific">Shewanella baltica (strain OS223)</name>
    <dbReference type="NCBI Taxonomy" id="407976"/>
    <lineage>
        <taxon>Bacteria</taxon>
        <taxon>Pseudomonadati</taxon>
        <taxon>Pseudomonadota</taxon>
        <taxon>Gammaproteobacteria</taxon>
        <taxon>Alteromonadales</taxon>
        <taxon>Shewanellaceae</taxon>
        <taxon>Shewanella</taxon>
    </lineage>
</organism>
<proteinExistence type="inferred from homology"/>
<accession>B8EBL1</accession>
<dbReference type="EC" id="2.7.7.6" evidence="1"/>
<dbReference type="EMBL" id="CP001252">
    <property type="protein sequence ID" value="ACK48535.1"/>
    <property type="molecule type" value="Genomic_DNA"/>
</dbReference>
<dbReference type="RefSeq" id="WP_006083606.1">
    <property type="nucleotide sequence ID" value="NC_011663.1"/>
</dbReference>
<dbReference type="SMR" id="B8EBL1"/>
<dbReference type="GeneID" id="11774507"/>
<dbReference type="KEGG" id="sbp:Sbal223_4062"/>
<dbReference type="HOGENOM" id="CLU_000524_3_1_6"/>
<dbReference type="Proteomes" id="UP000002507">
    <property type="component" value="Chromosome"/>
</dbReference>
<dbReference type="GO" id="GO:0000428">
    <property type="term" value="C:DNA-directed RNA polymerase complex"/>
    <property type="evidence" value="ECO:0007669"/>
    <property type="project" value="UniProtKB-KW"/>
</dbReference>
<dbReference type="GO" id="GO:0003677">
    <property type="term" value="F:DNA binding"/>
    <property type="evidence" value="ECO:0007669"/>
    <property type="project" value="UniProtKB-UniRule"/>
</dbReference>
<dbReference type="GO" id="GO:0003899">
    <property type="term" value="F:DNA-directed RNA polymerase activity"/>
    <property type="evidence" value="ECO:0007669"/>
    <property type="project" value="UniProtKB-UniRule"/>
</dbReference>
<dbReference type="GO" id="GO:0000287">
    <property type="term" value="F:magnesium ion binding"/>
    <property type="evidence" value="ECO:0007669"/>
    <property type="project" value="UniProtKB-UniRule"/>
</dbReference>
<dbReference type="GO" id="GO:0008270">
    <property type="term" value="F:zinc ion binding"/>
    <property type="evidence" value="ECO:0007669"/>
    <property type="project" value="UniProtKB-UniRule"/>
</dbReference>
<dbReference type="GO" id="GO:0006351">
    <property type="term" value="P:DNA-templated transcription"/>
    <property type="evidence" value="ECO:0007669"/>
    <property type="project" value="UniProtKB-UniRule"/>
</dbReference>
<dbReference type="CDD" id="cd02655">
    <property type="entry name" value="RNAP_beta'_C"/>
    <property type="match status" value="1"/>
</dbReference>
<dbReference type="CDD" id="cd01609">
    <property type="entry name" value="RNAP_beta'_N"/>
    <property type="match status" value="1"/>
</dbReference>
<dbReference type="FunFam" id="1.10.132.30:FF:000003">
    <property type="entry name" value="DNA-directed RNA polymerase subunit beta"/>
    <property type="match status" value="1"/>
</dbReference>
<dbReference type="FunFam" id="1.10.150.390:FF:000002">
    <property type="entry name" value="DNA-directed RNA polymerase subunit beta"/>
    <property type="match status" value="1"/>
</dbReference>
<dbReference type="FunFam" id="1.10.40.90:FF:000001">
    <property type="entry name" value="DNA-directed RNA polymerase subunit beta"/>
    <property type="match status" value="1"/>
</dbReference>
<dbReference type="FunFam" id="4.10.860.120:FF:000001">
    <property type="entry name" value="DNA-directed RNA polymerase subunit beta"/>
    <property type="match status" value="1"/>
</dbReference>
<dbReference type="Gene3D" id="1.10.132.30">
    <property type="match status" value="1"/>
</dbReference>
<dbReference type="Gene3D" id="1.10.150.390">
    <property type="match status" value="1"/>
</dbReference>
<dbReference type="Gene3D" id="1.10.1790.20">
    <property type="match status" value="1"/>
</dbReference>
<dbReference type="Gene3D" id="1.10.40.90">
    <property type="match status" value="1"/>
</dbReference>
<dbReference type="Gene3D" id="2.40.40.20">
    <property type="match status" value="1"/>
</dbReference>
<dbReference type="Gene3D" id="2.40.50.100">
    <property type="match status" value="3"/>
</dbReference>
<dbReference type="Gene3D" id="4.10.860.120">
    <property type="entry name" value="RNA polymerase II, clamp domain"/>
    <property type="match status" value="1"/>
</dbReference>
<dbReference type="Gene3D" id="1.10.274.100">
    <property type="entry name" value="RNA polymerase Rpb1, domain 3"/>
    <property type="match status" value="1"/>
</dbReference>
<dbReference type="HAMAP" id="MF_01322">
    <property type="entry name" value="RNApol_bact_RpoC"/>
    <property type="match status" value="1"/>
</dbReference>
<dbReference type="InterPro" id="IPR045867">
    <property type="entry name" value="DNA-dir_RpoC_beta_prime"/>
</dbReference>
<dbReference type="InterPro" id="IPR012754">
    <property type="entry name" value="DNA-dir_RpoC_beta_prime_bact"/>
</dbReference>
<dbReference type="InterPro" id="IPR000722">
    <property type="entry name" value="RNA_pol_asu"/>
</dbReference>
<dbReference type="InterPro" id="IPR006592">
    <property type="entry name" value="RNA_pol_N"/>
</dbReference>
<dbReference type="InterPro" id="IPR007080">
    <property type="entry name" value="RNA_pol_Rpb1_1"/>
</dbReference>
<dbReference type="InterPro" id="IPR007066">
    <property type="entry name" value="RNA_pol_Rpb1_3"/>
</dbReference>
<dbReference type="InterPro" id="IPR042102">
    <property type="entry name" value="RNA_pol_Rpb1_3_sf"/>
</dbReference>
<dbReference type="InterPro" id="IPR007083">
    <property type="entry name" value="RNA_pol_Rpb1_4"/>
</dbReference>
<dbReference type="InterPro" id="IPR007081">
    <property type="entry name" value="RNA_pol_Rpb1_5"/>
</dbReference>
<dbReference type="InterPro" id="IPR044893">
    <property type="entry name" value="RNA_pol_Rpb1_clamp_domain"/>
</dbReference>
<dbReference type="InterPro" id="IPR038120">
    <property type="entry name" value="Rpb1_funnel_sf"/>
</dbReference>
<dbReference type="NCBIfam" id="TIGR02386">
    <property type="entry name" value="rpoC_TIGR"/>
    <property type="match status" value="1"/>
</dbReference>
<dbReference type="PANTHER" id="PTHR19376">
    <property type="entry name" value="DNA-DIRECTED RNA POLYMERASE"/>
    <property type="match status" value="1"/>
</dbReference>
<dbReference type="PANTHER" id="PTHR19376:SF54">
    <property type="entry name" value="DNA-DIRECTED RNA POLYMERASE SUBUNIT BETA"/>
    <property type="match status" value="1"/>
</dbReference>
<dbReference type="Pfam" id="PF04997">
    <property type="entry name" value="RNA_pol_Rpb1_1"/>
    <property type="match status" value="1"/>
</dbReference>
<dbReference type="Pfam" id="PF00623">
    <property type="entry name" value="RNA_pol_Rpb1_2"/>
    <property type="match status" value="2"/>
</dbReference>
<dbReference type="Pfam" id="PF04983">
    <property type="entry name" value="RNA_pol_Rpb1_3"/>
    <property type="match status" value="1"/>
</dbReference>
<dbReference type="Pfam" id="PF05000">
    <property type="entry name" value="RNA_pol_Rpb1_4"/>
    <property type="match status" value="1"/>
</dbReference>
<dbReference type="Pfam" id="PF04998">
    <property type="entry name" value="RNA_pol_Rpb1_5"/>
    <property type="match status" value="1"/>
</dbReference>
<dbReference type="SMART" id="SM00663">
    <property type="entry name" value="RPOLA_N"/>
    <property type="match status" value="1"/>
</dbReference>
<dbReference type="SUPFAM" id="SSF64484">
    <property type="entry name" value="beta and beta-prime subunits of DNA dependent RNA-polymerase"/>
    <property type="match status" value="1"/>
</dbReference>
<comment type="function">
    <text evidence="1">DNA-dependent RNA polymerase catalyzes the transcription of DNA into RNA using the four ribonucleoside triphosphates as substrates.</text>
</comment>
<comment type="catalytic activity">
    <reaction evidence="1">
        <text>RNA(n) + a ribonucleoside 5'-triphosphate = RNA(n+1) + diphosphate</text>
        <dbReference type="Rhea" id="RHEA:21248"/>
        <dbReference type="Rhea" id="RHEA-COMP:14527"/>
        <dbReference type="Rhea" id="RHEA-COMP:17342"/>
        <dbReference type="ChEBI" id="CHEBI:33019"/>
        <dbReference type="ChEBI" id="CHEBI:61557"/>
        <dbReference type="ChEBI" id="CHEBI:140395"/>
        <dbReference type="EC" id="2.7.7.6"/>
    </reaction>
</comment>
<comment type="cofactor">
    <cofactor evidence="1">
        <name>Mg(2+)</name>
        <dbReference type="ChEBI" id="CHEBI:18420"/>
    </cofactor>
    <text evidence="1">Binds 1 Mg(2+) ion per subunit.</text>
</comment>
<comment type="cofactor">
    <cofactor evidence="1">
        <name>Zn(2+)</name>
        <dbReference type="ChEBI" id="CHEBI:29105"/>
    </cofactor>
    <text evidence="1">Binds 2 Zn(2+) ions per subunit.</text>
</comment>
<comment type="subunit">
    <text evidence="1">The RNAP catalytic core consists of 2 alpha, 1 beta, 1 beta' and 1 omega subunit. When a sigma factor is associated with the core the holoenzyme is formed, which can initiate transcription.</text>
</comment>
<comment type="similarity">
    <text evidence="1">Belongs to the RNA polymerase beta' chain family.</text>
</comment>
<sequence length="1405" mass="155316">MKDLLKFLKQQSKTEEFNGIKIGLASPDLIRSWSFGEVKKPETINYRTFKPEREGLFCARIFGPVKDYECLCGKYKRLKHRGVICEKCGVEVTQTKVRRERMGHIELASPVAHIWFLKSLPSRIGLMLDMTLRDIERVLYFESFVVIEPGMTSLERGQMLTEETYLDALEEYGDEFEAKMGAEAVLELLRAIDLAKEIEQMREELPSINSETRRKKVTKRLKLMEAFYTSGNKPEWMILKVLPVLPPDLRPLVPLDGGRFATSDLNDLYRRVINRNNRLKRLLDLAAPDIIVRNEKRMLQESVDALLDNGRRGRAITGSNKRPLKSLADMIKGKQGRFRQNLLGKRVDYSGRSVITVGPTLRLHQCGLPKKMALELFKPFIYGKLEGRGLATTIKAAKKMVEREVAEVWDVLDEVIREHPVMLNRAPTLHRLGIQAFEPVLIEGKAIQLHPLVCAAYNADFDGDQMAVHVPLTLEAQLEARALMMSTNNILSPANGEPVITPSQDVVLGLYYTSRERINGRGEGMAFMSVAEVEKAYATGAAELHARVKVRITETIIGDTGERTEQRRIVDTTVGRALLSLILPAGLSFDLVNQNMGKKQISKLLNTCYRQLGLKDTVIFADQLMYTGFRFATISGASVGIDDMVIPDEKYTLVADAEAEVLEIQEQFQSGLVTAGERYNKVIDIWASANEKVSKAMMENLSTETVINRDGVEEKQASFNSIYMMADSGARGSAAQIRQLAGMRGLMAKPDGSIIETPITANFREGLNVLQYFISTHGARKGLADTALKTANSGYLTRRLVDVAQDLVVIEDDCGTHEGLTMKPLIEGGDVVEPLRERVLGRVVALDVFYPGTEDVLAPRNTLLDEAWCDKLEEYSIDEVIVRSVISCDTDFGVCAACYGRDLARGHIINHGEAIGVVAAQSIGEPGTQLTMRTFHIGGAASRASAENNVQVKNSGSLKLHNAKHVTNSDGKLVIVSRSSELAVIDELGREKERYKVPYGTVLEKLEEAAVEAGDVIANWDPHTHPIISEVAGSIKFVDMIDGVTMTRQTDELTGLSSIVILDVGQRGTAGKEMRPMIRLLGANGADLMIPGTEVPAQYFLPGSAIVNLEDNAQINVGDALARIPQESSKTRDITGGLPRVADLFEARKPKEPAILAEISGTISFGKETKGKRRLVITPADGGDHYEEMIPKWRNLNVFEGEKVERGEVIADGPEAAHDILRLRGIHNVANYIVNEVQDVYRLQGVKINDKHIEVIIRQMLRKCLITSAGDTDFLEGEQAEVSRVKIANRELIAQGKVPATFERELLGITKASLATESFISAASFQETTRVLTEAAVGGKSDQLRGLKENVIVGRLIPAGTGYAYHKTRNEARAKKNEPVVVNKITASEAEQNLADLLNLAGSQD</sequence>
<protein>
    <recommendedName>
        <fullName evidence="1">DNA-directed RNA polymerase subunit beta'</fullName>
        <shortName evidence="1">RNAP subunit beta'</shortName>
        <ecNumber evidence="1">2.7.7.6</ecNumber>
    </recommendedName>
    <alternativeName>
        <fullName evidence="1">RNA polymerase subunit beta'</fullName>
    </alternativeName>
    <alternativeName>
        <fullName evidence="1">Transcriptase subunit beta'</fullName>
    </alternativeName>
</protein>